<keyword id="KW-0175">Coiled coil</keyword>
<keyword id="KW-0539">Nucleus</keyword>
<keyword id="KW-1185">Reference proteome</keyword>
<keyword id="KW-0690">Ribosome biogenesis</keyword>
<keyword id="KW-0698">rRNA processing</keyword>
<comment type="function">
    <text evidence="1">Component of the NOP7 complex, which is required for maturation of the 25S and 5.8S ribosomal RNAs and formation of the 60S ribosome.</text>
</comment>
<comment type="subunit">
    <text evidence="1">Component of the NOP7 complex, composed of ERB1, NOP7 and YTM1. The complex is held together by ERB1, which interacts with NOP7 via its N-terminal domain and with YTM1 via a high-affinity interaction between the seven-bladed beta-propeller domains of the 2 proteins. The NOP7 complex associates with the 66S pre-ribosome.</text>
</comment>
<comment type="subcellular location">
    <subcellularLocation>
        <location evidence="1">Nucleus</location>
        <location evidence="1">Nucleolus</location>
    </subcellularLocation>
    <subcellularLocation>
        <location evidence="1">Nucleus</location>
        <location evidence="1">Nucleoplasm</location>
    </subcellularLocation>
</comment>
<comment type="similarity">
    <text evidence="1">Belongs to the pescadillo family.</text>
</comment>
<organism>
    <name type="scientific">Kluyveromyces lactis (strain ATCC 8585 / CBS 2359 / DSM 70799 / NBRC 1267 / NRRL Y-1140 / WM37)</name>
    <name type="common">Yeast</name>
    <name type="synonym">Candida sphaerica</name>
    <dbReference type="NCBI Taxonomy" id="284590"/>
    <lineage>
        <taxon>Eukaryota</taxon>
        <taxon>Fungi</taxon>
        <taxon>Dikarya</taxon>
        <taxon>Ascomycota</taxon>
        <taxon>Saccharomycotina</taxon>
        <taxon>Saccharomycetes</taxon>
        <taxon>Saccharomycetales</taxon>
        <taxon>Saccharomycetaceae</taxon>
        <taxon>Kluyveromyces</taxon>
    </lineage>
</organism>
<evidence type="ECO:0000255" key="1">
    <source>
        <dbReference type="HAMAP-Rule" id="MF_03028"/>
    </source>
</evidence>
<evidence type="ECO:0000256" key="2">
    <source>
        <dbReference type="SAM" id="MobiDB-lite"/>
    </source>
</evidence>
<protein>
    <recommendedName>
        <fullName evidence="1">Pescadillo homolog</fullName>
    </recommendedName>
    <alternativeName>
        <fullName evidence="1">Nucleolar protein 7 homolog</fullName>
    </alternativeName>
</protein>
<gene>
    <name evidence="1" type="primary">NOP7</name>
    <name type="ordered locus">KLLA0D15268g</name>
</gene>
<name>PESC_KLULA</name>
<accession>Q6CQQ1</accession>
<reference key="1">
    <citation type="journal article" date="2004" name="Nature">
        <title>Genome evolution in yeasts.</title>
        <authorList>
            <person name="Dujon B."/>
            <person name="Sherman D."/>
            <person name="Fischer G."/>
            <person name="Durrens P."/>
            <person name="Casaregola S."/>
            <person name="Lafontaine I."/>
            <person name="de Montigny J."/>
            <person name="Marck C."/>
            <person name="Neuveglise C."/>
            <person name="Talla E."/>
            <person name="Goffard N."/>
            <person name="Frangeul L."/>
            <person name="Aigle M."/>
            <person name="Anthouard V."/>
            <person name="Babour A."/>
            <person name="Barbe V."/>
            <person name="Barnay S."/>
            <person name="Blanchin S."/>
            <person name="Beckerich J.-M."/>
            <person name="Beyne E."/>
            <person name="Bleykasten C."/>
            <person name="Boisrame A."/>
            <person name="Boyer J."/>
            <person name="Cattolico L."/>
            <person name="Confanioleri F."/>
            <person name="de Daruvar A."/>
            <person name="Despons L."/>
            <person name="Fabre E."/>
            <person name="Fairhead C."/>
            <person name="Ferry-Dumazet H."/>
            <person name="Groppi A."/>
            <person name="Hantraye F."/>
            <person name="Hennequin C."/>
            <person name="Jauniaux N."/>
            <person name="Joyet P."/>
            <person name="Kachouri R."/>
            <person name="Kerrest A."/>
            <person name="Koszul R."/>
            <person name="Lemaire M."/>
            <person name="Lesur I."/>
            <person name="Ma L."/>
            <person name="Muller H."/>
            <person name="Nicaud J.-M."/>
            <person name="Nikolski M."/>
            <person name="Oztas S."/>
            <person name="Ozier-Kalogeropoulos O."/>
            <person name="Pellenz S."/>
            <person name="Potier S."/>
            <person name="Richard G.-F."/>
            <person name="Straub M.-L."/>
            <person name="Suleau A."/>
            <person name="Swennen D."/>
            <person name="Tekaia F."/>
            <person name="Wesolowski-Louvel M."/>
            <person name="Westhof E."/>
            <person name="Wirth B."/>
            <person name="Zeniou-Meyer M."/>
            <person name="Zivanovic Y."/>
            <person name="Bolotin-Fukuhara M."/>
            <person name="Thierry A."/>
            <person name="Bouchier C."/>
            <person name="Caudron B."/>
            <person name="Scarpelli C."/>
            <person name="Gaillardin C."/>
            <person name="Weissenbach J."/>
            <person name="Wincker P."/>
            <person name="Souciet J.-L."/>
        </authorList>
    </citation>
    <scope>NUCLEOTIDE SEQUENCE [LARGE SCALE GENOMIC DNA]</scope>
    <source>
        <strain>ATCC 8585 / CBS 2359 / DSM 70799 / NBRC 1267 / NRRL Y-1140 / WM37</strain>
    </source>
</reference>
<proteinExistence type="inferred from homology"/>
<sequence length="605" mass="69467">MRIKKRNTRGNARNFITRSQAVRKLQISLADFRRLCIFKGIYPREPRNKKKANKGSTAPTTFYYYKDIQYLMHEPVLAKFREHKTFAKKLTKALGRGEVSAAKRLEENRPNYQLDNIIKERYPSFADALRDVDDALNMLFLFANLPATDQVSSRITQSAQQMCDQWSAYIAKERCVRKVFVSIKGVYYQASVKGEDVRWLVPYKFPENIPSDVDFRIMLTFLEFYSTLLHFVLFKLYTDAGLVYPPKLDIKKNKLIGGLSAYILESNDEKSSLAVKPKELSENVEVQELGANTLKTALKADSNEHDEEEQDQDQEQNVEDVELDKFEDTNKNQGDQLEQPSKFDSPVATLFSEFVFYVGREVPLDIVEFLILSCGGSAVSEATLDQLTDKQDIDLSKVTHQIVDRPVLKNKVANRTYVQPQWIFDSINKCELVPANLYLPGEPLPPHLSPWGDSTGYDPTAENDEDVEGSDAEEIDESADEDAESEEVEEDDTAAVALNEDDEDDEDELRQQKELELEAQGISYSEAKDVIDSESSDKKKKKKRKATEEEEEKDLKLIMMSNKQRKLYKKMKYSNEKKDEKIEQLKQKKKQIAKTKAKLAKLDKK</sequence>
<dbReference type="EMBL" id="CR382124">
    <property type="protein sequence ID" value="CAH00834.1"/>
    <property type="molecule type" value="Genomic_DNA"/>
</dbReference>
<dbReference type="RefSeq" id="XP_453738.1">
    <property type="nucleotide sequence ID" value="XM_453738.1"/>
</dbReference>
<dbReference type="SMR" id="Q6CQQ1"/>
<dbReference type="FunCoup" id="Q6CQQ1">
    <property type="interactions" value="1440"/>
</dbReference>
<dbReference type="STRING" id="284590.Q6CQQ1"/>
<dbReference type="PaxDb" id="284590-Q6CQQ1"/>
<dbReference type="KEGG" id="kla:KLLA0_D15268g"/>
<dbReference type="eggNOG" id="KOG2481">
    <property type="taxonomic scope" value="Eukaryota"/>
</dbReference>
<dbReference type="HOGENOM" id="CLU_019619_1_1_1"/>
<dbReference type="InParanoid" id="Q6CQQ1"/>
<dbReference type="OMA" id="QKVTWIV"/>
<dbReference type="Proteomes" id="UP000000598">
    <property type="component" value="Chromosome D"/>
</dbReference>
<dbReference type="GO" id="GO:0005654">
    <property type="term" value="C:nucleoplasm"/>
    <property type="evidence" value="ECO:0007669"/>
    <property type="project" value="UniProtKB-SubCell"/>
</dbReference>
<dbReference type="GO" id="GO:0070545">
    <property type="term" value="C:PeBoW complex"/>
    <property type="evidence" value="ECO:0007669"/>
    <property type="project" value="TreeGrafter"/>
</dbReference>
<dbReference type="GO" id="GO:0030687">
    <property type="term" value="C:preribosome, large subunit precursor"/>
    <property type="evidence" value="ECO:0007669"/>
    <property type="project" value="UniProtKB-UniRule"/>
</dbReference>
<dbReference type="GO" id="GO:0043021">
    <property type="term" value="F:ribonucleoprotein complex binding"/>
    <property type="evidence" value="ECO:0007669"/>
    <property type="project" value="UniProtKB-UniRule"/>
</dbReference>
<dbReference type="GO" id="GO:0003723">
    <property type="term" value="F:RNA binding"/>
    <property type="evidence" value="ECO:0007669"/>
    <property type="project" value="TreeGrafter"/>
</dbReference>
<dbReference type="GO" id="GO:0000466">
    <property type="term" value="P:maturation of 5.8S rRNA from tricistronic rRNA transcript (SSU-rRNA, 5.8S rRNA, LSU-rRNA)"/>
    <property type="evidence" value="ECO:0007669"/>
    <property type="project" value="UniProtKB-UniRule"/>
</dbReference>
<dbReference type="GO" id="GO:0000463">
    <property type="term" value="P:maturation of LSU-rRNA from tricistronic rRNA transcript (SSU-rRNA, 5.8S rRNA, LSU-rRNA)"/>
    <property type="evidence" value="ECO:0007669"/>
    <property type="project" value="UniProtKB-UniRule"/>
</dbReference>
<dbReference type="CDD" id="cd17709">
    <property type="entry name" value="BRCT_pescadillo_like"/>
    <property type="match status" value="1"/>
</dbReference>
<dbReference type="FunFam" id="3.40.50.10190:FF:000067">
    <property type="entry name" value="Pescadillo homolog"/>
    <property type="match status" value="1"/>
</dbReference>
<dbReference type="Gene3D" id="3.40.50.10190">
    <property type="entry name" value="BRCT domain"/>
    <property type="match status" value="1"/>
</dbReference>
<dbReference type="HAMAP" id="MF_03028">
    <property type="entry name" value="Pescadillo"/>
    <property type="match status" value="1"/>
</dbReference>
<dbReference type="InterPro" id="IPR001357">
    <property type="entry name" value="BRCT_dom"/>
</dbReference>
<dbReference type="InterPro" id="IPR036420">
    <property type="entry name" value="BRCT_dom_sf"/>
</dbReference>
<dbReference type="InterPro" id="IPR010613">
    <property type="entry name" value="PES"/>
</dbReference>
<dbReference type="PANTHER" id="PTHR12221">
    <property type="entry name" value="PESCADILLO - RELATED"/>
    <property type="match status" value="1"/>
</dbReference>
<dbReference type="PANTHER" id="PTHR12221:SF6">
    <property type="entry name" value="PESCADILLO HOMOLOG"/>
    <property type="match status" value="1"/>
</dbReference>
<dbReference type="Pfam" id="PF16589">
    <property type="entry name" value="BRCT_2"/>
    <property type="match status" value="1"/>
</dbReference>
<dbReference type="Pfam" id="PF06732">
    <property type="entry name" value="Pescadillo_N"/>
    <property type="match status" value="1"/>
</dbReference>
<dbReference type="SMART" id="SM00292">
    <property type="entry name" value="BRCT"/>
    <property type="match status" value="1"/>
</dbReference>
<dbReference type="SUPFAM" id="SSF52113">
    <property type="entry name" value="BRCT domain"/>
    <property type="match status" value="1"/>
</dbReference>
<dbReference type="PROSITE" id="PS50172">
    <property type="entry name" value="BRCT"/>
    <property type="match status" value="1"/>
</dbReference>
<feature type="chain" id="PRO_0000370492" description="Pescadillo homolog">
    <location>
        <begin position="1"/>
        <end position="605"/>
    </location>
</feature>
<feature type="domain" description="BRCT" evidence="1">
    <location>
        <begin position="346"/>
        <end position="440"/>
    </location>
</feature>
<feature type="region of interest" description="Disordered" evidence="2">
    <location>
        <begin position="449"/>
        <end position="553"/>
    </location>
</feature>
<feature type="coiled-coil region" evidence="1">
    <location>
        <begin position="533"/>
        <end position="605"/>
    </location>
</feature>
<feature type="compositionally biased region" description="Acidic residues" evidence="2">
    <location>
        <begin position="461"/>
        <end position="508"/>
    </location>
</feature>
<feature type="compositionally biased region" description="Basic and acidic residues" evidence="2">
    <location>
        <begin position="526"/>
        <end position="537"/>
    </location>
</feature>